<name>CT0C_CONTS</name>
<proteinExistence type="inferred from homology"/>
<keyword id="KW-0528">Neurotoxin</keyword>
<keyword id="KW-0964">Secreted</keyword>
<keyword id="KW-0732">Signal</keyword>
<keyword id="KW-0800">Toxin</keyword>
<reference key="1">
    <citation type="journal article" date="2001" name="Mol. Biol. Evol.">
        <title>Mechanisms for evolving hypervariability: the case of conopeptides.</title>
        <authorList>
            <person name="Conticello S.G."/>
            <person name="Gilad Y."/>
            <person name="Avidan N."/>
            <person name="Ben-Asher E."/>
            <person name="Levy Z."/>
            <person name="Fainzilber M."/>
        </authorList>
    </citation>
    <scope>NUCLEOTIDE SEQUENCE [MRNA]</scope>
    <source>
        <tissue>Venom duct</tissue>
    </source>
</reference>
<organism>
    <name type="scientific">Conus tessulatus</name>
    <name type="common">Tessellate cone</name>
    <dbReference type="NCBI Taxonomy" id="101317"/>
    <lineage>
        <taxon>Eukaryota</taxon>
        <taxon>Metazoa</taxon>
        <taxon>Spiralia</taxon>
        <taxon>Lophotrochozoa</taxon>
        <taxon>Mollusca</taxon>
        <taxon>Gastropoda</taxon>
        <taxon>Caenogastropoda</taxon>
        <taxon>Neogastropoda</taxon>
        <taxon>Conoidea</taxon>
        <taxon>Conidae</taxon>
        <taxon>Conus</taxon>
        <taxon>Tesselliconus</taxon>
    </lineage>
</organism>
<feature type="signal peptide" evidence="2">
    <location>
        <begin position="1"/>
        <end position="19"/>
    </location>
</feature>
<feature type="propeptide" id="PRO_0000404997" evidence="1">
    <location>
        <begin position="20"/>
        <end position="54"/>
    </location>
</feature>
<feature type="peptide" id="PRO_0000404998" description="Conotoxin TsMLCL-02">
    <location>
        <begin position="55"/>
        <end position="62"/>
    </location>
</feature>
<protein>
    <recommendedName>
        <fullName>Conotoxin TsMLCL-02</fullName>
    </recommendedName>
</protein>
<comment type="subcellular location">
    <subcellularLocation>
        <location evidence="1">Secreted</location>
    </subcellularLocation>
</comment>
<comment type="tissue specificity">
    <text evidence="3">Expressed by the venom duct.</text>
</comment>
<comment type="miscellaneous">
    <text>The mature peptide does not contain cysteine residue.</text>
</comment>
<comment type="similarity">
    <text evidence="3">Belongs to the conotoxin T superfamily.</text>
</comment>
<dbReference type="EMBL" id="AF214997">
    <property type="protein sequence ID" value="AAG60425.1"/>
    <property type="molecule type" value="mRNA"/>
</dbReference>
<dbReference type="ConoServer" id="684">
    <property type="toxin name" value="TsMLCL-02 precursor"/>
</dbReference>
<dbReference type="GO" id="GO:0005576">
    <property type="term" value="C:extracellular region"/>
    <property type="evidence" value="ECO:0007669"/>
    <property type="project" value="UniProtKB-SubCell"/>
</dbReference>
<dbReference type="GO" id="GO:0090729">
    <property type="term" value="F:toxin activity"/>
    <property type="evidence" value="ECO:0007669"/>
    <property type="project" value="UniProtKB-KW"/>
</dbReference>
<dbReference type="InterPro" id="IPR031565">
    <property type="entry name" value="T-conotoxin"/>
</dbReference>
<dbReference type="Pfam" id="PF16981">
    <property type="entry name" value="Chi-conotoxin"/>
    <property type="match status" value="1"/>
</dbReference>
<evidence type="ECO:0000250" key="1"/>
<evidence type="ECO:0000255" key="2"/>
<evidence type="ECO:0000305" key="3"/>
<accession>Q9BPD7</accession>
<sequence>MLCLPVFIILLLLASPAAPNPLERRIQSDLIRAALEDADMKTEKGILSSIMGTLGKIVGLAP</sequence>